<gene>
    <name evidence="1" type="primary">rpsF</name>
    <name type="ordered locus">Mmwyl1_3465</name>
</gene>
<organism>
    <name type="scientific">Marinomonas sp. (strain MWYL1)</name>
    <dbReference type="NCBI Taxonomy" id="400668"/>
    <lineage>
        <taxon>Bacteria</taxon>
        <taxon>Pseudomonadati</taxon>
        <taxon>Pseudomonadota</taxon>
        <taxon>Gammaproteobacteria</taxon>
        <taxon>Oceanospirillales</taxon>
        <taxon>Oceanospirillaceae</taxon>
        <taxon>Marinomonas</taxon>
    </lineage>
</organism>
<dbReference type="EMBL" id="CP000749">
    <property type="protein sequence ID" value="ABR72368.1"/>
    <property type="molecule type" value="Genomic_DNA"/>
</dbReference>
<dbReference type="SMR" id="A6W0Y9"/>
<dbReference type="STRING" id="400668.Mmwyl1_3465"/>
<dbReference type="KEGG" id="mmw:Mmwyl1_3465"/>
<dbReference type="eggNOG" id="COG0360">
    <property type="taxonomic scope" value="Bacteria"/>
</dbReference>
<dbReference type="HOGENOM" id="CLU_113441_6_0_6"/>
<dbReference type="OrthoDB" id="9812702at2"/>
<dbReference type="GO" id="GO:0022627">
    <property type="term" value="C:cytosolic small ribosomal subunit"/>
    <property type="evidence" value="ECO:0007669"/>
    <property type="project" value="TreeGrafter"/>
</dbReference>
<dbReference type="GO" id="GO:0070181">
    <property type="term" value="F:small ribosomal subunit rRNA binding"/>
    <property type="evidence" value="ECO:0007669"/>
    <property type="project" value="TreeGrafter"/>
</dbReference>
<dbReference type="GO" id="GO:0003735">
    <property type="term" value="F:structural constituent of ribosome"/>
    <property type="evidence" value="ECO:0007669"/>
    <property type="project" value="InterPro"/>
</dbReference>
<dbReference type="GO" id="GO:0006412">
    <property type="term" value="P:translation"/>
    <property type="evidence" value="ECO:0007669"/>
    <property type="project" value="UniProtKB-UniRule"/>
</dbReference>
<dbReference type="CDD" id="cd00473">
    <property type="entry name" value="bS6"/>
    <property type="match status" value="1"/>
</dbReference>
<dbReference type="FunFam" id="3.30.70.60:FF:000003">
    <property type="entry name" value="30S ribosomal protein S6"/>
    <property type="match status" value="1"/>
</dbReference>
<dbReference type="Gene3D" id="3.30.70.60">
    <property type="match status" value="1"/>
</dbReference>
<dbReference type="HAMAP" id="MF_00360">
    <property type="entry name" value="Ribosomal_bS6"/>
    <property type="match status" value="1"/>
</dbReference>
<dbReference type="InterPro" id="IPR000529">
    <property type="entry name" value="Ribosomal_bS6"/>
</dbReference>
<dbReference type="InterPro" id="IPR020815">
    <property type="entry name" value="Ribosomal_bS6_CS"/>
</dbReference>
<dbReference type="InterPro" id="IPR035980">
    <property type="entry name" value="Ribosomal_bS6_sf"/>
</dbReference>
<dbReference type="InterPro" id="IPR020814">
    <property type="entry name" value="Ribosomal_S6_plastid/chlpt"/>
</dbReference>
<dbReference type="InterPro" id="IPR014717">
    <property type="entry name" value="Transl_elong_EF1B/ribsomal_bS6"/>
</dbReference>
<dbReference type="NCBIfam" id="TIGR00166">
    <property type="entry name" value="S6"/>
    <property type="match status" value="1"/>
</dbReference>
<dbReference type="PANTHER" id="PTHR21011">
    <property type="entry name" value="MITOCHONDRIAL 28S RIBOSOMAL PROTEIN S6"/>
    <property type="match status" value="1"/>
</dbReference>
<dbReference type="PANTHER" id="PTHR21011:SF1">
    <property type="entry name" value="SMALL RIBOSOMAL SUBUNIT PROTEIN BS6M"/>
    <property type="match status" value="1"/>
</dbReference>
<dbReference type="Pfam" id="PF01250">
    <property type="entry name" value="Ribosomal_S6"/>
    <property type="match status" value="1"/>
</dbReference>
<dbReference type="SUPFAM" id="SSF54995">
    <property type="entry name" value="Ribosomal protein S6"/>
    <property type="match status" value="1"/>
</dbReference>
<dbReference type="PROSITE" id="PS01048">
    <property type="entry name" value="RIBOSOMAL_S6"/>
    <property type="match status" value="1"/>
</dbReference>
<accession>A6W0Y9</accession>
<protein>
    <recommendedName>
        <fullName evidence="1">Small ribosomal subunit protein bS6</fullName>
    </recommendedName>
    <alternativeName>
        <fullName evidence="3">30S ribosomal protein S6</fullName>
    </alternativeName>
</protein>
<feature type="chain" id="PRO_1000079453" description="Small ribosomal subunit protein bS6">
    <location>
        <begin position="1"/>
        <end position="134"/>
    </location>
</feature>
<feature type="region of interest" description="Disordered" evidence="2">
    <location>
        <begin position="97"/>
        <end position="134"/>
    </location>
</feature>
<feature type="compositionally biased region" description="Basic and acidic residues" evidence="2">
    <location>
        <begin position="105"/>
        <end position="125"/>
    </location>
</feature>
<keyword id="KW-0687">Ribonucleoprotein</keyword>
<keyword id="KW-0689">Ribosomal protein</keyword>
<keyword id="KW-0694">RNA-binding</keyword>
<keyword id="KW-0699">rRNA-binding</keyword>
<comment type="function">
    <text evidence="1">Binds together with bS18 to 16S ribosomal RNA.</text>
</comment>
<comment type="similarity">
    <text evidence="1">Belongs to the bacterial ribosomal protein bS6 family.</text>
</comment>
<name>RS6_MARMS</name>
<evidence type="ECO:0000255" key="1">
    <source>
        <dbReference type="HAMAP-Rule" id="MF_00360"/>
    </source>
</evidence>
<evidence type="ECO:0000256" key="2">
    <source>
        <dbReference type="SAM" id="MobiDB-lite"/>
    </source>
</evidence>
<evidence type="ECO:0000305" key="3"/>
<sequence>MRHYEIVFLVHPDQSEQVPAMVERYTNLITEDGGQVHRLEDWGRRQLAYPINKIHKAHYVLMNIECSDSVLSELNDTFRYNDAIIRNLVIRRKEAVTDVSPIKASEGREDRRSAPQREERNHDNSDEVSEESED</sequence>
<reference key="1">
    <citation type="submission" date="2007-06" db="EMBL/GenBank/DDBJ databases">
        <title>Complete sequence of Marinomonas sp. MWYL1.</title>
        <authorList>
            <consortium name="US DOE Joint Genome Institute"/>
            <person name="Copeland A."/>
            <person name="Lucas S."/>
            <person name="Lapidus A."/>
            <person name="Barry K."/>
            <person name="Glavina del Rio T."/>
            <person name="Dalin E."/>
            <person name="Tice H."/>
            <person name="Pitluck S."/>
            <person name="Kiss H."/>
            <person name="Brettin T."/>
            <person name="Bruce D."/>
            <person name="Detter J.C."/>
            <person name="Han C."/>
            <person name="Schmutz J."/>
            <person name="Larimer F."/>
            <person name="Land M."/>
            <person name="Hauser L."/>
            <person name="Kyrpides N."/>
            <person name="Kim E."/>
            <person name="Johnston A.W.B."/>
            <person name="Todd J.D."/>
            <person name="Rogers R."/>
            <person name="Wexler M."/>
            <person name="Bond P.L."/>
            <person name="Li Y."/>
            <person name="Richardson P."/>
        </authorList>
    </citation>
    <scope>NUCLEOTIDE SEQUENCE [LARGE SCALE GENOMIC DNA]</scope>
    <source>
        <strain>MWYL1</strain>
    </source>
</reference>
<proteinExistence type="inferred from homology"/>